<feature type="chain" id="PRO_1000124200" description="Glycerol kinase">
    <location>
        <begin position="1"/>
        <end position="493"/>
    </location>
</feature>
<feature type="binding site" evidence="1">
    <location>
        <position position="11"/>
    </location>
    <ligand>
        <name>ADP</name>
        <dbReference type="ChEBI" id="CHEBI:456216"/>
    </ligand>
</feature>
<feature type="binding site" evidence="1">
    <location>
        <position position="11"/>
    </location>
    <ligand>
        <name>ATP</name>
        <dbReference type="ChEBI" id="CHEBI:30616"/>
    </ligand>
</feature>
<feature type="binding site" evidence="1">
    <location>
        <position position="11"/>
    </location>
    <ligand>
        <name>sn-glycerol 3-phosphate</name>
        <dbReference type="ChEBI" id="CHEBI:57597"/>
    </ligand>
</feature>
<feature type="binding site" evidence="1">
    <location>
        <position position="12"/>
    </location>
    <ligand>
        <name>ATP</name>
        <dbReference type="ChEBI" id="CHEBI:30616"/>
    </ligand>
</feature>
<feature type="binding site" evidence="1">
    <location>
        <position position="13"/>
    </location>
    <ligand>
        <name>ATP</name>
        <dbReference type="ChEBI" id="CHEBI:30616"/>
    </ligand>
</feature>
<feature type="binding site" evidence="1">
    <location>
        <position position="15"/>
    </location>
    <ligand>
        <name>ADP</name>
        <dbReference type="ChEBI" id="CHEBI:456216"/>
    </ligand>
</feature>
<feature type="binding site" evidence="1">
    <location>
        <position position="80"/>
    </location>
    <ligand>
        <name>glycerol</name>
        <dbReference type="ChEBI" id="CHEBI:17754"/>
    </ligand>
</feature>
<feature type="binding site" evidence="1">
    <location>
        <position position="80"/>
    </location>
    <ligand>
        <name>sn-glycerol 3-phosphate</name>
        <dbReference type="ChEBI" id="CHEBI:57597"/>
    </ligand>
</feature>
<feature type="binding site" evidence="1">
    <location>
        <position position="81"/>
    </location>
    <ligand>
        <name>glycerol</name>
        <dbReference type="ChEBI" id="CHEBI:17754"/>
    </ligand>
</feature>
<feature type="binding site" evidence="1">
    <location>
        <position position="81"/>
    </location>
    <ligand>
        <name>sn-glycerol 3-phosphate</name>
        <dbReference type="ChEBI" id="CHEBI:57597"/>
    </ligand>
</feature>
<feature type="binding site" evidence="1">
    <location>
        <position position="132"/>
    </location>
    <ligand>
        <name>glycerol</name>
        <dbReference type="ChEBI" id="CHEBI:17754"/>
    </ligand>
</feature>
<feature type="binding site" evidence="1">
    <location>
        <position position="132"/>
    </location>
    <ligand>
        <name>sn-glycerol 3-phosphate</name>
        <dbReference type="ChEBI" id="CHEBI:57597"/>
    </ligand>
</feature>
<feature type="binding site" evidence="1">
    <location>
        <position position="241"/>
    </location>
    <ligand>
        <name>glycerol</name>
        <dbReference type="ChEBI" id="CHEBI:17754"/>
    </ligand>
</feature>
<feature type="binding site" evidence="1">
    <location>
        <position position="241"/>
    </location>
    <ligand>
        <name>sn-glycerol 3-phosphate</name>
        <dbReference type="ChEBI" id="CHEBI:57597"/>
    </ligand>
</feature>
<feature type="binding site" evidence="1">
    <location>
        <position position="242"/>
    </location>
    <ligand>
        <name>glycerol</name>
        <dbReference type="ChEBI" id="CHEBI:17754"/>
    </ligand>
</feature>
<feature type="binding site" evidence="1">
    <location>
        <position position="263"/>
    </location>
    <ligand>
        <name>ADP</name>
        <dbReference type="ChEBI" id="CHEBI:456216"/>
    </ligand>
</feature>
<feature type="binding site" evidence="1">
    <location>
        <position position="263"/>
    </location>
    <ligand>
        <name>ATP</name>
        <dbReference type="ChEBI" id="CHEBI:30616"/>
    </ligand>
</feature>
<feature type="binding site" evidence="1">
    <location>
        <position position="306"/>
    </location>
    <ligand>
        <name>ADP</name>
        <dbReference type="ChEBI" id="CHEBI:456216"/>
    </ligand>
</feature>
<feature type="binding site" evidence="1">
    <location>
        <position position="306"/>
    </location>
    <ligand>
        <name>ATP</name>
        <dbReference type="ChEBI" id="CHEBI:30616"/>
    </ligand>
</feature>
<feature type="binding site" evidence="1">
    <location>
        <position position="310"/>
    </location>
    <ligand>
        <name>ATP</name>
        <dbReference type="ChEBI" id="CHEBI:30616"/>
    </ligand>
</feature>
<feature type="binding site" evidence="1">
    <location>
        <position position="408"/>
    </location>
    <ligand>
        <name>ADP</name>
        <dbReference type="ChEBI" id="CHEBI:456216"/>
    </ligand>
</feature>
<feature type="binding site" evidence="1">
    <location>
        <position position="408"/>
    </location>
    <ligand>
        <name>ATP</name>
        <dbReference type="ChEBI" id="CHEBI:30616"/>
    </ligand>
</feature>
<comment type="function">
    <text evidence="1">Key enzyme in the regulation of glycerol uptake and metabolism. Catalyzes the phosphorylation of glycerol to yield sn-glycerol 3-phosphate.</text>
</comment>
<comment type="catalytic activity">
    <reaction evidence="1">
        <text>glycerol + ATP = sn-glycerol 3-phosphate + ADP + H(+)</text>
        <dbReference type="Rhea" id="RHEA:21644"/>
        <dbReference type="ChEBI" id="CHEBI:15378"/>
        <dbReference type="ChEBI" id="CHEBI:17754"/>
        <dbReference type="ChEBI" id="CHEBI:30616"/>
        <dbReference type="ChEBI" id="CHEBI:57597"/>
        <dbReference type="ChEBI" id="CHEBI:456216"/>
        <dbReference type="EC" id="2.7.1.30"/>
    </reaction>
</comment>
<comment type="activity regulation">
    <text evidence="1">Inhibited by fructose 1,6-bisphosphate (FBP).</text>
</comment>
<comment type="pathway">
    <text evidence="1">Polyol metabolism; glycerol degradation via glycerol kinase pathway; sn-glycerol 3-phosphate from glycerol: step 1/1.</text>
</comment>
<comment type="similarity">
    <text evidence="1">Belongs to the FGGY kinase family.</text>
</comment>
<dbReference type="EC" id="2.7.1.30" evidence="1"/>
<dbReference type="EMBL" id="CP001150">
    <property type="protein sequence ID" value="ACM00836.1"/>
    <property type="molecule type" value="Genomic_DNA"/>
</dbReference>
<dbReference type="RefSeq" id="WP_015920429.1">
    <property type="nucleotide sequence ID" value="NC_011963.1"/>
</dbReference>
<dbReference type="SMR" id="B9KRP4"/>
<dbReference type="GeneID" id="67446412"/>
<dbReference type="KEGG" id="rsk:RSKD131_0976"/>
<dbReference type="HOGENOM" id="CLU_009281_2_3_5"/>
<dbReference type="UniPathway" id="UPA00618">
    <property type="reaction ID" value="UER00672"/>
</dbReference>
<dbReference type="GO" id="GO:0005829">
    <property type="term" value="C:cytosol"/>
    <property type="evidence" value="ECO:0007669"/>
    <property type="project" value="TreeGrafter"/>
</dbReference>
<dbReference type="GO" id="GO:0005524">
    <property type="term" value="F:ATP binding"/>
    <property type="evidence" value="ECO:0007669"/>
    <property type="project" value="UniProtKB-UniRule"/>
</dbReference>
<dbReference type="GO" id="GO:0004370">
    <property type="term" value="F:glycerol kinase activity"/>
    <property type="evidence" value="ECO:0000250"/>
    <property type="project" value="UniProtKB"/>
</dbReference>
<dbReference type="GO" id="GO:0019563">
    <property type="term" value="P:glycerol catabolic process"/>
    <property type="evidence" value="ECO:0007669"/>
    <property type="project" value="UniProtKB-UniRule"/>
</dbReference>
<dbReference type="GO" id="GO:0006071">
    <property type="term" value="P:glycerol metabolic process"/>
    <property type="evidence" value="ECO:0000250"/>
    <property type="project" value="UniProtKB"/>
</dbReference>
<dbReference type="GO" id="GO:0006072">
    <property type="term" value="P:glycerol-3-phosphate metabolic process"/>
    <property type="evidence" value="ECO:0007669"/>
    <property type="project" value="InterPro"/>
</dbReference>
<dbReference type="CDD" id="cd07786">
    <property type="entry name" value="FGGY_EcGK_like"/>
    <property type="match status" value="1"/>
</dbReference>
<dbReference type="FunFam" id="3.30.420.40:FF:000007">
    <property type="entry name" value="Glycerol kinase"/>
    <property type="match status" value="1"/>
</dbReference>
<dbReference type="FunFam" id="3.30.420.40:FF:000008">
    <property type="entry name" value="Glycerol kinase"/>
    <property type="match status" value="1"/>
</dbReference>
<dbReference type="Gene3D" id="3.30.420.40">
    <property type="match status" value="2"/>
</dbReference>
<dbReference type="HAMAP" id="MF_00186">
    <property type="entry name" value="Glycerol_kin"/>
    <property type="match status" value="1"/>
</dbReference>
<dbReference type="InterPro" id="IPR043129">
    <property type="entry name" value="ATPase_NBD"/>
</dbReference>
<dbReference type="InterPro" id="IPR000577">
    <property type="entry name" value="Carb_kinase_FGGY"/>
</dbReference>
<dbReference type="InterPro" id="IPR018483">
    <property type="entry name" value="Carb_kinase_FGGY_CS"/>
</dbReference>
<dbReference type="InterPro" id="IPR018485">
    <property type="entry name" value="FGGY_C"/>
</dbReference>
<dbReference type="InterPro" id="IPR018484">
    <property type="entry name" value="FGGY_N"/>
</dbReference>
<dbReference type="InterPro" id="IPR005999">
    <property type="entry name" value="Glycerol_kin"/>
</dbReference>
<dbReference type="NCBIfam" id="TIGR01311">
    <property type="entry name" value="glycerol_kin"/>
    <property type="match status" value="1"/>
</dbReference>
<dbReference type="NCBIfam" id="NF000756">
    <property type="entry name" value="PRK00047.1"/>
    <property type="match status" value="1"/>
</dbReference>
<dbReference type="PANTHER" id="PTHR10196:SF78">
    <property type="entry name" value="GLYCEROL KINASE"/>
    <property type="match status" value="1"/>
</dbReference>
<dbReference type="PANTHER" id="PTHR10196">
    <property type="entry name" value="SUGAR KINASE"/>
    <property type="match status" value="1"/>
</dbReference>
<dbReference type="Pfam" id="PF02782">
    <property type="entry name" value="FGGY_C"/>
    <property type="match status" value="1"/>
</dbReference>
<dbReference type="Pfam" id="PF00370">
    <property type="entry name" value="FGGY_N"/>
    <property type="match status" value="1"/>
</dbReference>
<dbReference type="PIRSF" id="PIRSF000538">
    <property type="entry name" value="GlpK"/>
    <property type="match status" value="1"/>
</dbReference>
<dbReference type="SUPFAM" id="SSF53067">
    <property type="entry name" value="Actin-like ATPase domain"/>
    <property type="match status" value="2"/>
</dbReference>
<dbReference type="PROSITE" id="PS00933">
    <property type="entry name" value="FGGY_KINASES_1"/>
    <property type="match status" value="1"/>
</dbReference>
<dbReference type="PROSITE" id="PS00445">
    <property type="entry name" value="FGGY_KINASES_2"/>
    <property type="match status" value="1"/>
</dbReference>
<name>GLPK_CERSK</name>
<reference key="1">
    <citation type="journal article" date="2009" name="J. Bacteriol.">
        <title>Complete genome sequence of Rhodobacter sphaeroides KD131.</title>
        <authorList>
            <person name="Lim S.-K."/>
            <person name="Kim S.J."/>
            <person name="Cha S.H."/>
            <person name="Oh Y.-K."/>
            <person name="Rhee H.-J."/>
            <person name="Kim M.-S."/>
            <person name="Lee J.K."/>
        </authorList>
    </citation>
    <scope>NUCLEOTIDE SEQUENCE [LARGE SCALE GENOMIC DNA]</scope>
    <source>
        <strain>KD131 / KCTC 12085</strain>
    </source>
</reference>
<evidence type="ECO:0000255" key="1">
    <source>
        <dbReference type="HAMAP-Rule" id="MF_00186"/>
    </source>
</evidence>
<keyword id="KW-0067">ATP-binding</keyword>
<keyword id="KW-0319">Glycerol metabolism</keyword>
<keyword id="KW-0418">Kinase</keyword>
<keyword id="KW-0547">Nucleotide-binding</keyword>
<keyword id="KW-0808">Transferase</keyword>
<organism>
    <name type="scientific">Cereibacter sphaeroides (strain KD131 / KCTC 12085)</name>
    <name type="common">Rhodobacter sphaeroides</name>
    <dbReference type="NCBI Taxonomy" id="557760"/>
    <lineage>
        <taxon>Bacteria</taxon>
        <taxon>Pseudomonadati</taxon>
        <taxon>Pseudomonadota</taxon>
        <taxon>Alphaproteobacteria</taxon>
        <taxon>Rhodobacterales</taxon>
        <taxon>Paracoccaceae</taxon>
        <taxon>Cereibacter</taxon>
    </lineage>
</organism>
<accession>B9KRP4</accession>
<proteinExistence type="inferred from homology"/>
<protein>
    <recommendedName>
        <fullName evidence="1">Glycerol kinase</fullName>
        <ecNumber evidence="1">2.7.1.30</ecNumber>
    </recommendedName>
    <alternativeName>
        <fullName evidence="1">ATP:glycerol 3-phosphotransferase</fullName>
    </alternativeName>
    <alternativeName>
        <fullName evidence="1">Glycerokinase</fullName>
        <shortName evidence="1">GK</shortName>
    </alternativeName>
</protein>
<gene>
    <name evidence="1" type="primary">glpK</name>
    <name type="ordered locus">RSKD131_0976</name>
</gene>
<sequence>MNHILAIDQGTTSSRAMVFDEALTLKSVAQEEFPQIYPRPGWVEHDPSDLWSSVAATARAAVERAEIDGSLAAIGITNQRETVVVWERASGHPIHNAIVWQDRRTADLCHALAEAGHEPTITERTGLLLDPYFSATKLKWLLDHVEGARARARRGELLFGTVDSYLIWKLTGGRAHVTDATNAARTMLFDIGRGIWDPEICGLLDIPMEMLPEVKDCAALFGMTRADLFGREIPILGVAGDQQAATCGQACFRPGMMKSTYGTGCFALLNTGEERVTSRARLLTTIAYQLGGKRTYALEGSIFIAGAVVQWLRDGLKIIREAGETQGLALSSDAAQDLVIVPAFTGLGAPWWKPESRGAVFGLTRNSGPAEFARAALESVGYQTRDLLEAMRADWAAGAEGVLRVDGGMAASDWSMQFLADIIGAPVDRPVVRETTALGVAWLAGMQAGLCPGPEEFAADWALERRFEPQMEASVREAKYDRWGRAVRAVMAV</sequence>